<keyword id="KW-0091">Biomineralization</keyword>
<keyword id="KW-0903">Direct protein sequencing</keyword>
<keyword id="KW-0272">Extracellular matrix</keyword>
<keyword id="KW-0597">Phosphoprotein</keyword>
<keyword id="KW-1185">Reference proteome</keyword>
<keyword id="KW-0964">Secreted</keyword>
<feature type="chain" id="PRO_0000144064" description="Amelogenin-like protein">
    <location>
        <begin position="1"/>
        <end position="29" status="greater than"/>
    </location>
</feature>
<feature type="modified residue" description="Phosphoserine" evidence="1">
    <location>
        <position position="16"/>
    </location>
</feature>
<feature type="non-terminal residue">
    <location>
        <position position="29"/>
    </location>
</feature>
<proteinExistence type="evidence at protein level"/>
<gene>
    <name type="primary">AMEL</name>
</gene>
<dbReference type="PIR" id="S00564">
    <property type="entry name" value="S00564"/>
</dbReference>
<dbReference type="InParanoid" id="P12761"/>
<dbReference type="Proteomes" id="UP000001811">
    <property type="component" value="Unplaced"/>
</dbReference>
<dbReference type="GO" id="GO:0005576">
    <property type="term" value="C:extracellular region"/>
    <property type="evidence" value="ECO:0007669"/>
    <property type="project" value="UniProtKB-KW"/>
</dbReference>
<dbReference type="GO" id="GO:0030345">
    <property type="term" value="F:structural constituent of tooth enamel"/>
    <property type="evidence" value="ECO:0007669"/>
    <property type="project" value="TreeGrafter"/>
</dbReference>
<dbReference type="GO" id="GO:0070166">
    <property type="term" value="P:enamel mineralization"/>
    <property type="evidence" value="ECO:0007669"/>
    <property type="project" value="TreeGrafter"/>
</dbReference>
<dbReference type="InterPro" id="IPR004116">
    <property type="entry name" value="Amelogenin"/>
</dbReference>
<dbReference type="PANTHER" id="PTHR46794:SF2">
    <property type="entry name" value="AMELOGENIN, X ISOFORM"/>
    <property type="match status" value="1"/>
</dbReference>
<dbReference type="PANTHER" id="PTHR46794">
    <property type="entry name" value="AMELOGENIN, Y ISOFORM"/>
    <property type="match status" value="1"/>
</dbReference>
<dbReference type="Pfam" id="PF02948">
    <property type="entry name" value="Amelogenin"/>
    <property type="match status" value="1"/>
</dbReference>
<dbReference type="PRINTS" id="PR01757">
    <property type="entry name" value="AMELOGENIN"/>
</dbReference>
<accession>P12761</accession>
<comment type="function">
    <text>Tooth enamel proteins are produced in ameloblasts and play a role in biomineralization.</text>
</comment>
<comment type="subcellular location">
    <subcellularLocation>
        <location>Secreted</location>
        <location>Extracellular space</location>
        <location>Extracellular matrix</location>
    </subcellularLocation>
</comment>
<comment type="miscellaneous">
    <text>This protein sequence was found in 70 kDa-, 20 kDa- and 18 kDa-rabbit teeth enamel proteins.</text>
</comment>
<comment type="miscellaneous">
    <text>Rabbit teeth, in contrast to other species, do not contain amelogenins, but amelogenin-like proteins. Enamelins and amelogenin-like proteins share this tooth enamel protein fragment.</text>
</comment>
<comment type="similarity">
    <text evidence="2">Belongs to the amelogenin family.</text>
</comment>
<protein>
    <recommendedName>
        <fullName>Amelogenin-like protein</fullName>
    </recommendedName>
    <alternativeName>
        <fullName>Tooth enamel protein</fullName>
    </alternativeName>
</protein>
<sequence length="29" mass="3290">LPLPPHPGHPGYINFSYEVLTPLKXYQSI</sequence>
<organism>
    <name type="scientific">Oryctolagus cuniculus</name>
    <name type="common">Rabbit</name>
    <dbReference type="NCBI Taxonomy" id="9986"/>
    <lineage>
        <taxon>Eukaryota</taxon>
        <taxon>Metazoa</taxon>
        <taxon>Chordata</taxon>
        <taxon>Craniata</taxon>
        <taxon>Vertebrata</taxon>
        <taxon>Euteleostomi</taxon>
        <taxon>Mammalia</taxon>
        <taxon>Eutheria</taxon>
        <taxon>Euarchontoglires</taxon>
        <taxon>Glires</taxon>
        <taxon>Lagomorpha</taxon>
        <taxon>Leporidae</taxon>
        <taxon>Oryctolagus</taxon>
    </lineage>
</organism>
<evidence type="ECO:0000250" key="1">
    <source>
        <dbReference type="UniProtKB" id="P45561"/>
    </source>
</evidence>
<evidence type="ECO:0000305" key="2"/>
<name>AMEL_RABIT</name>
<reference key="1">
    <citation type="journal article" date="1988" name="Biochem. J.">
        <title>Biosynthesis and characterization of rabbit tooth enamel extracellular-matrix proteins.</title>
        <authorList>
            <person name="Zeichner-David M."/>
            <person name="Vides J."/>
            <person name="McDougall M."/>
            <person name="Fincham A."/>
            <person name="Snead M.L."/>
            <person name="Bessem C."/>
            <person name="Slavkin H.C."/>
        </authorList>
    </citation>
    <scope>PROTEIN SEQUENCE</scope>
</reference>